<name>RL25_RHOPS</name>
<gene>
    <name evidence="1" type="primary">rplY</name>
    <name evidence="1" type="synonym">ctc</name>
    <name type="ordered locus">RPD_4001</name>
</gene>
<feature type="chain" id="PRO_1000052926" description="Large ribosomal subunit protein bL25">
    <location>
        <begin position="1"/>
        <end position="234"/>
    </location>
</feature>
<feature type="region of interest" description="Disordered" evidence="2">
    <location>
        <begin position="1"/>
        <end position="24"/>
    </location>
</feature>
<comment type="function">
    <text evidence="1">This is one of the proteins that binds to the 5S RNA in the ribosome where it forms part of the central protuberance.</text>
</comment>
<comment type="subunit">
    <text evidence="1">Part of the 50S ribosomal subunit; part of the 5S rRNA/L5/L18/L25 subcomplex. Contacts the 5S rRNA. Binds to the 5S rRNA independently of L5 and L18.</text>
</comment>
<comment type="similarity">
    <text evidence="1">Belongs to the bacterial ribosomal protein bL25 family. CTC subfamily.</text>
</comment>
<protein>
    <recommendedName>
        <fullName evidence="1">Large ribosomal subunit protein bL25</fullName>
    </recommendedName>
    <alternativeName>
        <fullName evidence="3">50S ribosomal protein L25</fullName>
    </alternativeName>
    <alternativeName>
        <fullName evidence="1">General stress protein CTC</fullName>
    </alternativeName>
</protein>
<organism>
    <name type="scientific">Rhodopseudomonas palustris (strain BisB5)</name>
    <dbReference type="NCBI Taxonomy" id="316057"/>
    <lineage>
        <taxon>Bacteria</taxon>
        <taxon>Pseudomonadati</taxon>
        <taxon>Pseudomonadota</taxon>
        <taxon>Alphaproteobacteria</taxon>
        <taxon>Hyphomicrobiales</taxon>
        <taxon>Nitrobacteraceae</taxon>
        <taxon>Rhodopseudomonas</taxon>
    </lineage>
</organism>
<proteinExistence type="inferred from homology"/>
<keyword id="KW-0687">Ribonucleoprotein</keyword>
<keyword id="KW-0689">Ribosomal protein</keyword>
<keyword id="KW-0694">RNA-binding</keyword>
<keyword id="KW-0699">rRNA-binding</keyword>
<evidence type="ECO:0000255" key="1">
    <source>
        <dbReference type="HAMAP-Rule" id="MF_01334"/>
    </source>
</evidence>
<evidence type="ECO:0000256" key="2">
    <source>
        <dbReference type="SAM" id="MobiDB-lite"/>
    </source>
</evidence>
<evidence type="ECO:0000305" key="3"/>
<reference key="1">
    <citation type="submission" date="2006-03" db="EMBL/GenBank/DDBJ databases">
        <title>Complete sequence of Rhodopseudomonas palustris BisB5.</title>
        <authorList>
            <consortium name="US DOE Joint Genome Institute"/>
            <person name="Copeland A."/>
            <person name="Lucas S."/>
            <person name="Lapidus A."/>
            <person name="Barry K."/>
            <person name="Detter J.C."/>
            <person name="Glavina del Rio T."/>
            <person name="Hammon N."/>
            <person name="Israni S."/>
            <person name="Dalin E."/>
            <person name="Tice H."/>
            <person name="Pitluck S."/>
            <person name="Chain P."/>
            <person name="Malfatti S."/>
            <person name="Shin M."/>
            <person name="Vergez L."/>
            <person name="Schmutz J."/>
            <person name="Larimer F."/>
            <person name="Land M."/>
            <person name="Hauser L."/>
            <person name="Pelletier D.A."/>
            <person name="Kyrpides N."/>
            <person name="Lykidis A."/>
            <person name="Oda Y."/>
            <person name="Harwood C.S."/>
            <person name="Richardson P."/>
        </authorList>
    </citation>
    <scope>NUCLEOTIDE SEQUENCE [LARGE SCALE GENOMIC DNA]</scope>
    <source>
        <strain>BisB5</strain>
    </source>
</reference>
<sequence length="234" mass="24296">MATVMELKATARPKSGKGAARAERRAGRVPGVIYGDNQPPLPISVEDKELRLRILAGRFLTTVFDVVLDGKKHRVIPRDYHLDPVKDFPIHVDFLRLGAGATIRVSVPLHLKGLESAPGVKRGGTFNIVTHTVDLEAPAESIPQFIEADVSTLDIGVSLHLSDIALPNGVKSVSREDVTLVTIVPPSGFNEEQKAAAAGAAAPAAAAAPAAKAGAAKAPAAAAKAPAAPAAKKK</sequence>
<accession>Q131L9</accession>
<dbReference type="EMBL" id="CP000283">
    <property type="protein sequence ID" value="ABE41220.1"/>
    <property type="molecule type" value="Genomic_DNA"/>
</dbReference>
<dbReference type="SMR" id="Q131L9"/>
<dbReference type="STRING" id="316057.RPD_4001"/>
<dbReference type="KEGG" id="rpd:RPD_4001"/>
<dbReference type="eggNOG" id="COG1825">
    <property type="taxonomic scope" value="Bacteria"/>
</dbReference>
<dbReference type="HOGENOM" id="CLU_075939_0_0_5"/>
<dbReference type="BioCyc" id="RPAL316057:RPD_RS20115-MONOMER"/>
<dbReference type="Proteomes" id="UP000001818">
    <property type="component" value="Chromosome"/>
</dbReference>
<dbReference type="GO" id="GO:0022625">
    <property type="term" value="C:cytosolic large ribosomal subunit"/>
    <property type="evidence" value="ECO:0007669"/>
    <property type="project" value="TreeGrafter"/>
</dbReference>
<dbReference type="GO" id="GO:0008097">
    <property type="term" value="F:5S rRNA binding"/>
    <property type="evidence" value="ECO:0007669"/>
    <property type="project" value="InterPro"/>
</dbReference>
<dbReference type="GO" id="GO:0003735">
    <property type="term" value="F:structural constituent of ribosome"/>
    <property type="evidence" value="ECO:0007669"/>
    <property type="project" value="InterPro"/>
</dbReference>
<dbReference type="GO" id="GO:0006412">
    <property type="term" value="P:translation"/>
    <property type="evidence" value="ECO:0007669"/>
    <property type="project" value="UniProtKB-UniRule"/>
</dbReference>
<dbReference type="CDD" id="cd00495">
    <property type="entry name" value="Ribosomal_L25_TL5_CTC"/>
    <property type="match status" value="1"/>
</dbReference>
<dbReference type="Gene3D" id="2.170.120.20">
    <property type="entry name" value="Ribosomal protein L25, beta domain"/>
    <property type="match status" value="1"/>
</dbReference>
<dbReference type="Gene3D" id="2.40.240.10">
    <property type="entry name" value="Ribosomal Protein L25, Chain P"/>
    <property type="match status" value="1"/>
</dbReference>
<dbReference type="HAMAP" id="MF_01334">
    <property type="entry name" value="Ribosomal_bL25_CTC"/>
    <property type="match status" value="1"/>
</dbReference>
<dbReference type="InterPro" id="IPR020056">
    <property type="entry name" value="Rbsml_bL25/Gln-tRNA_synth_N"/>
</dbReference>
<dbReference type="InterPro" id="IPR011035">
    <property type="entry name" value="Ribosomal_bL25/Gln-tRNA_synth"/>
</dbReference>
<dbReference type="InterPro" id="IPR020057">
    <property type="entry name" value="Ribosomal_bL25_b-dom"/>
</dbReference>
<dbReference type="InterPro" id="IPR037121">
    <property type="entry name" value="Ribosomal_bL25_C"/>
</dbReference>
<dbReference type="InterPro" id="IPR001021">
    <property type="entry name" value="Ribosomal_bL25_long"/>
</dbReference>
<dbReference type="InterPro" id="IPR029751">
    <property type="entry name" value="Ribosomal_L25_dom"/>
</dbReference>
<dbReference type="InterPro" id="IPR020930">
    <property type="entry name" value="Ribosomal_uL5_bac-type"/>
</dbReference>
<dbReference type="NCBIfam" id="TIGR00731">
    <property type="entry name" value="bL25_bact_ctc"/>
    <property type="match status" value="1"/>
</dbReference>
<dbReference type="NCBIfam" id="NF004128">
    <property type="entry name" value="PRK05618.1-2"/>
    <property type="match status" value="1"/>
</dbReference>
<dbReference type="PANTHER" id="PTHR33284">
    <property type="entry name" value="RIBOSOMAL PROTEIN L25/GLN-TRNA SYNTHETASE, ANTI-CODON-BINDING DOMAIN-CONTAINING PROTEIN"/>
    <property type="match status" value="1"/>
</dbReference>
<dbReference type="PANTHER" id="PTHR33284:SF1">
    <property type="entry name" value="RIBOSOMAL PROTEIN L25_GLN-TRNA SYNTHETASE, ANTI-CODON-BINDING DOMAIN-CONTAINING PROTEIN"/>
    <property type="match status" value="1"/>
</dbReference>
<dbReference type="Pfam" id="PF01386">
    <property type="entry name" value="Ribosomal_L25p"/>
    <property type="match status" value="1"/>
</dbReference>
<dbReference type="Pfam" id="PF14693">
    <property type="entry name" value="Ribosomal_TL5_C"/>
    <property type="match status" value="1"/>
</dbReference>
<dbReference type="SUPFAM" id="SSF50715">
    <property type="entry name" value="Ribosomal protein L25-like"/>
    <property type="match status" value="1"/>
</dbReference>